<comment type="function">
    <text evidence="4 5 8">Substrate-specific adapter of a BCR (BTB-CUL3-RBX1) E3 ubiquitin ligase complex required for chromosome alignment and localization of PLK1 at kinetochores. The BCR(KLHL22) ubiquitin ligase complex mediates monoubiquitination of PLK1, leading to PLK1 dissociation from phosphoreceptor proteins and subsequent removal from kinetochores, allowing silencing of the spindle assembly checkpoint (SAC) and chromosome segregation. Monoubiquitination of PLK1 does not lead to PLK1 degradation (PubMed:19995937, PubMed:23455478). The BCR(KLHL22) ubiquitin ligase complex is also responsible for the amino acid-stimulated 'Lys-48' polyubiquitination and proteasomal degradation of DEPDC5. Through the degradation of DEPDC5, releases the GATOR1 complex-mediated inhibition of the TORC1 pathway. It is therefore an amino acid-dependent activator within the amino acid-sensing branch of the TORC1 pathway, indirectly regulating different cellular processes including cell growth and autophagy (PubMed:29769719).</text>
</comment>
<comment type="pathway">
    <text evidence="5 8">Protein modification; protein ubiquitination.</text>
</comment>
<comment type="subunit">
    <text evidence="4 5 6 8">Component of the BCR(KLHL22) E3 ubiquitin ligase complex, at least composed of CUL3, KLHL22 and RBX1 (PubMed:19995937). Interacts with PLK1 (PubMed:23455478, PubMed:24067371). Interacts with DEPDC5 (via DEP domain); the interaction depends on amino acid availability (PubMed:29769719). Interacts with YWHAE; required for the nuclear localization of KLHL22 upon amino acid starvation (PubMed:29769719).</text>
</comment>
<comment type="interaction">
    <interactant intactId="EBI-1996072">
        <id>Q53GT1</id>
    </interactant>
    <interactant intactId="EBI-456129">
        <id>Q13618</id>
        <label>CUL3</label>
    </interactant>
    <organismsDiffer>false</organismsDiffer>
    <experiments>18</experiments>
</comment>
<comment type="interaction">
    <interactant intactId="EBI-1996072">
        <id>Q53GT1</id>
    </interactant>
    <interactant intactId="EBI-356544">
        <id>P00367</id>
        <label>GLUD1</label>
    </interactant>
    <organismsDiffer>false</organismsDiffer>
    <experiments>9</experiments>
</comment>
<comment type="interaction">
    <interactant intactId="EBI-1996072">
        <id>Q53GT1</id>
    </interactant>
    <interactant intactId="EBI-352572">
        <id>P08238</id>
        <label>HSP90AB1</label>
    </interactant>
    <organismsDiffer>false</organismsDiffer>
    <experiments>2</experiments>
</comment>
<comment type="interaction">
    <interactant intactId="EBI-1996072">
        <id>Q53GT1</id>
    </interactant>
    <interactant intactId="EBI-744342">
        <id>Q8IVD9</id>
        <label>NUDCD3</label>
    </interactant>
    <organismsDiffer>false</organismsDiffer>
    <experiments>4</experiments>
</comment>
<comment type="interaction">
    <interactant intactId="EBI-1996072">
        <id>Q53GT1</id>
    </interactant>
    <interactant intactId="EBI-372899">
        <id>Q13148</id>
        <label>TARDBP</label>
    </interactant>
    <organismsDiffer>false</organismsDiffer>
    <experiments>4</experiments>
</comment>
<comment type="subcellular location">
    <subcellularLocation>
        <location evidence="5 8">Cytoplasm</location>
        <location evidence="5 8">Cytosol</location>
    </subcellularLocation>
    <subcellularLocation>
        <location evidence="5">Cytoplasm</location>
        <location evidence="5">Cytoskeleton</location>
        <location evidence="5">Microtubule organizing center</location>
        <location evidence="5">Centrosome</location>
    </subcellularLocation>
    <subcellularLocation>
        <location evidence="5">Cytoplasm</location>
        <location evidence="5">Cytoskeleton</location>
        <location evidence="5">Spindle</location>
    </subcellularLocation>
    <subcellularLocation>
        <location evidence="8">Nucleus</location>
    </subcellularLocation>
    <subcellularLocation>
        <location evidence="8">Lysosome</location>
    </subcellularLocation>
    <text evidence="5 8">Mainly cytoplasmic in prophase and prometaphase. Associates with the mitotic spindle as the cells reach chromosome bi-orientation. Localizes to the centrosomes shortly before cells enter anaphase After anaphase onset, predominantly associates with the polar microtubules connecting the 2 opposing centrosomes and gradually diffuses into the cytoplasm during telophase (PubMed:23455478). Localizes to the nucleus upon amino acid starvation (PubMed:29769719). Relocalizes to the cytosol and associates with lysosomes when amino acids are available (PubMed:29769719).</text>
</comment>
<comment type="alternative products">
    <event type="alternative splicing"/>
    <isoform>
        <id>Q53GT1-1</id>
        <name>1</name>
        <sequence type="displayed"/>
    </isoform>
    <isoform>
        <id>Q53GT1-3</id>
        <name>2</name>
        <sequence type="described" ref="VSP_057028"/>
    </isoform>
</comment>
<comment type="disease">
    <text evidence="7">Defects in KLHL22 has been found in a patient with isolated coloboma, a defect of the eye characterized by the absence of ocular structures due to abnormal morphogenesis of the optic cup and stalk, and the fusion of the fetal fissure (optic fissure). Isolated colobomas may be associated with an abnormally small eye (microphthalmia) or small cornea.</text>
</comment>
<comment type="miscellaneous">
    <text evidence="8">Potential oncogene that is up-regulated in breast cancer cells and promotes tumor growth.</text>
</comment>
<comment type="sequence caution" evidence="10">
    <conflict type="miscellaneous discrepancy">
        <sequence resource="EMBL-CDS" id="BAB55007"/>
    </conflict>
    <text>Aberrant splicing.</text>
</comment>
<keyword id="KW-0002">3D-structure</keyword>
<keyword id="KW-0007">Acetylation</keyword>
<keyword id="KW-0025">Alternative splicing</keyword>
<keyword id="KW-0131">Cell cycle</keyword>
<keyword id="KW-0132">Cell division</keyword>
<keyword id="KW-0963">Cytoplasm</keyword>
<keyword id="KW-0206">Cytoskeleton</keyword>
<keyword id="KW-0225">Disease variant</keyword>
<keyword id="KW-0880">Kelch repeat</keyword>
<keyword id="KW-0458">Lysosome</keyword>
<keyword id="KW-0498">Mitosis</keyword>
<keyword id="KW-0539">Nucleus</keyword>
<keyword id="KW-0597">Phosphoprotein</keyword>
<keyword id="KW-1267">Proteomics identification</keyword>
<keyword id="KW-1185">Reference proteome</keyword>
<keyword id="KW-0677">Repeat</keyword>
<keyword id="KW-0833">Ubl conjugation pathway</keyword>
<name>KLH22_HUMAN</name>
<sequence>MAEEQEFTQLCKLPAQPSHPHCVNNTYRSAQHSQALLRGLLALRDSGILFDVVLVVEGRHIEAHRILLAASCDYFRGMFAGGLKEMEQEEVLIHGVSYNAMCQILHFIYTSELELSLSNVQETLVAACQLQIPEIIHFCCDFLMSWVDEENILDVYRLAELFDLSRLTEQLDTYILKNFVAFSRTDKYRQLPLEKVYSLLSSNRLEVSCETEVYEGALLYHYSLEQVQADQISLHEPPKLLETVRFPLMEAEVLQRLHDKLDPSPLRDTVASALMYHRNESLQPSLQSPQTELRSDFQCVVGFGGIHSTPSTVLSDQAKYLNPLLGEWKHFTASLAPRMSNQGIAVLNNFVYLIGGDNNVQGFRAESRCWRYDPRHNRWFQIQSLQQEHADLSVCVVGRYIYAVAGRDYHNDLNAVERYDPATNSWAYVAPLKREVYAHAGATLEGKMYITCGRRGEDYLKETHCYDPGSNTWHTLADGPVRRAWHGMATLLNKLYVIGGSNNDAGYRRDVHQVACYSCTSGQWSSVCPLPAGHGEPGIAVLDNRIYVLGGRSHNRGSRTGYVHIYDVEKDCWEEGPQLDNSISGLAACVLTLPRSLLLEPPRGTPDRSQADPDFASEVMSVSDWEEFDNSSED</sequence>
<protein>
    <recommendedName>
        <fullName evidence="10">Kelch-like protein 22</fullName>
    </recommendedName>
</protein>
<proteinExistence type="evidence at protein level"/>
<reference key="1">
    <citation type="journal article" date="2004" name="Genome Biol.">
        <title>A genome annotation-driven approach to cloning the human ORFeome.</title>
        <authorList>
            <person name="Collins J.E."/>
            <person name="Wright C.L."/>
            <person name="Edwards C.A."/>
            <person name="Davis M.P."/>
            <person name="Grinham J.A."/>
            <person name="Cole C.G."/>
            <person name="Goward M.E."/>
            <person name="Aguado B."/>
            <person name="Mallya M."/>
            <person name="Mokrab Y."/>
            <person name="Huckle E.J."/>
            <person name="Beare D.M."/>
            <person name="Dunham I."/>
        </authorList>
    </citation>
    <scope>NUCLEOTIDE SEQUENCE [LARGE SCALE MRNA] (ISOFORM 1)</scope>
</reference>
<reference key="2">
    <citation type="journal article" date="2004" name="Nat. Genet.">
        <title>Complete sequencing and characterization of 21,243 full-length human cDNAs.</title>
        <authorList>
            <person name="Ota T."/>
            <person name="Suzuki Y."/>
            <person name="Nishikawa T."/>
            <person name="Otsuki T."/>
            <person name="Sugiyama T."/>
            <person name="Irie R."/>
            <person name="Wakamatsu A."/>
            <person name="Hayashi K."/>
            <person name="Sato H."/>
            <person name="Nagai K."/>
            <person name="Kimura K."/>
            <person name="Makita H."/>
            <person name="Sekine M."/>
            <person name="Obayashi M."/>
            <person name="Nishi T."/>
            <person name="Shibahara T."/>
            <person name="Tanaka T."/>
            <person name="Ishii S."/>
            <person name="Yamamoto J."/>
            <person name="Saito K."/>
            <person name="Kawai Y."/>
            <person name="Isono Y."/>
            <person name="Nakamura Y."/>
            <person name="Nagahari K."/>
            <person name="Murakami K."/>
            <person name="Yasuda T."/>
            <person name="Iwayanagi T."/>
            <person name="Wagatsuma M."/>
            <person name="Shiratori A."/>
            <person name="Sudo H."/>
            <person name="Hosoiri T."/>
            <person name="Kaku Y."/>
            <person name="Kodaira H."/>
            <person name="Kondo H."/>
            <person name="Sugawara M."/>
            <person name="Takahashi M."/>
            <person name="Kanda K."/>
            <person name="Yokoi T."/>
            <person name="Furuya T."/>
            <person name="Kikkawa E."/>
            <person name="Omura Y."/>
            <person name="Abe K."/>
            <person name="Kamihara K."/>
            <person name="Katsuta N."/>
            <person name="Sato K."/>
            <person name="Tanikawa M."/>
            <person name="Yamazaki M."/>
            <person name="Ninomiya K."/>
            <person name="Ishibashi T."/>
            <person name="Yamashita H."/>
            <person name="Murakawa K."/>
            <person name="Fujimori K."/>
            <person name="Tanai H."/>
            <person name="Kimata M."/>
            <person name="Watanabe M."/>
            <person name="Hiraoka S."/>
            <person name="Chiba Y."/>
            <person name="Ishida S."/>
            <person name="Ono Y."/>
            <person name="Takiguchi S."/>
            <person name="Watanabe S."/>
            <person name="Yosida M."/>
            <person name="Hotuta T."/>
            <person name="Kusano J."/>
            <person name="Kanehori K."/>
            <person name="Takahashi-Fujii A."/>
            <person name="Hara H."/>
            <person name="Tanase T.-O."/>
            <person name="Nomura Y."/>
            <person name="Togiya S."/>
            <person name="Komai F."/>
            <person name="Hara R."/>
            <person name="Takeuchi K."/>
            <person name="Arita M."/>
            <person name="Imose N."/>
            <person name="Musashino K."/>
            <person name="Yuuki H."/>
            <person name="Oshima A."/>
            <person name="Sasaki N."/>
            <person name="Aotsuka S."/>
            <person name="Yoshikawa Y."/>
            <person name="Matsunawa H."/>
            <person name="Ichihara T."/>
            <person name="Shiohata N."/>
            <person name="Sano S."/>
            <person name="Moriya S."/>
            <person name="Momiyama H."/>
            <person name="Satoh N."/>
            <person name="Takami S."/>
            <person name="Terashima Y."/>
            <person name="Suzuki O."/>
            <person name="Nakagawa S."/>
            <person name="Senoh A."/>
            <person name="Mizoguchi H."/>
            <person name="Goto Y."/>
            <person name="Shimizu F."/>
            <person name="Wakebe H."/>
            <person name="Hishigaki H."/>
            <person name="Watanabe T."/>
            <person name="Sugiyama A."/>
            <person name="Takemoto M."/>
            <person name="Kawakami B."/>
            <person name="Yamazaki M."/>
            <person name="Watanabe K."/>
            <person name="Kumagai A."/>
            <person name="Itakura S."/>
            <person name="Fukuzumi Y."/>
            <person name="Fujimori Y."/>
            <person name="Komiyama M."/>
            <person name="Tashiro H."/>
            <person name="Tanigami A."/>
            <person name="Fujiwara T."/>
            <person name="Ono T."/>
            <person name="Yamada K."/>
            <person name="Fujii Y."/>
            <person name="Ozaki K."/>
            <person name="Hirao M."/>
            <person name="Ohmori Y."/>
            <person name="Kawabata A."/>
            <person name="Hikiji T."/>
            <person name="Kobatake N."/>
            <person name="Inagaki H."/>
            <person name="Ikema Y."/>
            <person name="Okamoto S."/>
            <person name="Okitani R."/>
            <person name="Kawakami T."/>
            <person name="Noguchi S."/>
            <person name="Itoh T."/>
            <person name="Shigeta K."/>
            <person name="Senba T."/>
            <person name="Matsumura K."/>
            <person name="Nakajima Y."/>
            <person name="Mizuno T."/>
            <person name="Morinaga M."/>
            <person name="Sasaki M."/>
            <person name="Togashi T."/>
            <person name="Oyama M."/>
            <person name="Hata H."/>
            <person name="Watanabe M."/>
            <person name="Komatsu T."/>
            <person name="Mizushima-Sugano J."/>
            <person name="Satoh T."/>
            <person name="Shirai Y."/>
            <person name="Takahashi Y."/>
            <person name="Nakagawa K."/>
            <person name="Okumura K."/>
            <person name="Nagase T."/>
            <person name="Nomura N."/>
            <person name="Kikuchi H."/>
            <person name="Masuho Y."/>
            <person name="Yamashita R."/>
            <person name="Nakai K."/>
            <person name="Yada T."/>
            <person name="Nakamura Y."/>
            <person name="Ohara O."/>
            <person name="Isogai T."/>
            <person name="Sugano S."/>
        </authorList>
    </citation>
    <scope>NUCLEOTIDE SEQUENCE [LARGE SCALE MRNA] (ISOFORMS 1 AND 2)</scope>
    <source>
        <tissue>Brain</tissue>
        <tissue>Embryo</tissue>
    </source>
</reference>
<reference key="3">
    <citation type="submission" date="2005-04" db="EMBL/GenBank/DDBJ databases">
        <authorList>
            <person name="Suzuki Y."/>
            <person name="Sugano S."/>
            <person name="Totoki Y."/>
            <person name="Toyoda A."/>
            <person name="Takeda T."/>
            <person name="Sakaki Y."/>
            <person name="Tanaka A."/>
            <person name="Yokoyama S."/>
        </authorList>
    </citation>
    <scope>NUCLEOTIDE SEQUENCE [LARGE SCALE MRNA] (ISOFORM 1)</scope>
    <source>
        <tissue>Liver</tissue>
    </source>
</reference>
<reference key="4">
    <citation type="journal article" date="1999" name="Nature">
        <title>The DNA sequence of human chromosome 22.</title>
        <authorList>
            <person name="Dunham I."/>
            <person name="Hunt A.R."/>
            <person name="Collins J.E."/>
            <person name="Bruskiewich R."/>
            <person name="Beare D.M."/>
            <person name="Clamp M."/>
            <person name="Smink L.J."/>
            <person name="Ainscough R."/>
            <person name="Almeida J.P."/>
            <person name="Babbage A.K."/>
            <person name="Bagguley C."/>
            <person name="Bailey J."/>
            <person name="Barlow K.F."/>
            <person name="Bates K.N."/>
            <person name="Beasley O.P."/>
            <person name="Bird C.P."/>
            <person name="Blakey S.E."/>
            <person name="Bridgeman A.M."/>
            <person name="Buck D."/>
            <person name="Burgess J."/>
            <person name="Burrill W.D."/>
            <person name="Burton J."/>
            <person name="Carder C."/>
            <person name="Carter N.P."/>
            <person name="Chen Y."/>
            <person name="Clark G."/>
            <person name="Clegg S.M."/>
            <person name="Cobley V.E."/>
            <person name="Cole C.G."/>
            <person name="Collier R.E."/>
            <person name="Connor R."/>
            <person name="Conroy D."/>
            <person name="Corby N.R."/>
            <person name="Coville G.J."/>
            <person name="Cox A.V."/>
            <person name="Davis J."/>
            <person name="Dawson E."/>
            <person name="Dhami P.D."/>
            <person name="Dockree C."/>
            <person name="Dodsworth S.J."/>
            <person name="Durbin R.M."/>
            <person name="Ellington A.G."/>
            <person name="Evans K.L."/>
            <person name="Fey J.M."/>
            <person name="Fleming K."/>
            <person name="French L."/>
            <person name="Garner A.A."/>
            <person name="Gilbert J.G.R."/>
            <person name="Goward M.E."/>
            <person name="Grafham D.V."/>
            <person name="Griffiths M.N.D."/>
            <person name="Hall C."/>
            <person name="Hall R.E."/>
            <person name="Hall-Tamlyn G."/>
            <person name="Heathcott R.W."/>
            <person name="Ho S."/>
            <person name="Holmes S."/>
            <person name="Hunt S.E."/>
            <person name="Jones M.C."/>
            <person name="Kershaw J."/>
            <person name="Kimberley A.M."/>
            <person name="King A."/>
            <person name="Laird G.K."/>
            <person name="Langford C.F."/>
            <person name="Leversha M.A."/>
            <person name="Lloyd C."/>
            <person name="Lloyd D.M."/>
            <person name="Martyn I.D."/>
            <person name="Mashreghi-Mohammadi M."/>
            <person name="Matthews L.H."/>
            <person name="Mccann O.T."/>
            <person name="Mcclay J."/>
            <person name="Mclaren S."/>
            <person name="McMurray A.A."/>
            <person name="Milne S.A."/>
            <person name="Mortimore B.J."/>
            <person name="Odell C.N."/>
            <person name="Pavitt R."/>
            <person name="Pearce A.V."/>
            <person name="Pearson D."/>
            <person name="Phillimore B.J.C.T."/>
            <person name="Phillips S.H."/>
            <person name="Plumb R.W."/>
            <person name="Ramsay H."/>
            <person name="Ramsey Y."/>
            <person name="Rogers L."/>
            <person name="Ross M.T."/>
            <person name="Scott C.E."/>
            <person name="Sehra H.K."/>
            <person name="Skuce C.D."/>
            <person name="Smalley S."/>
            <person name="Smith M.L."/>
            <person name="Soderlund C."/>
            <person name="Spragon L."/>
            <person name="Steward C.A."/>
            <person name="Sulston J.E."/>
            <person name="Swann R.M."/>
            <person name="Vaudin M."/>
            <person name="Wall M."/>
            <person name="Wallis J.M."/>
            <person name="Whiteley M.N."/>
            <person name="Willey D.L."/>
            <person name="Williams L."/>
            <person name="Williams S.A."/>
            <person name="Williamson H."/>
            <person name="Wilmer T.E."/>
            <person name="Wilming L."/>
            <person name="Wright C.L."/>
            <person name="Hubbard T."/>
            <person name="Bentley D.R."/>
            <person name="Beck S."/>
            <person name="Rogers J."/>
            <person name="Shimizu N."/>
            <person name="Minoshima S."/>
            <person name="Kawasaki K."/>
            <person name="Sasaki T."/>
            <person name="Asakawa S."/>
            <person name="Kudoh J."/>
            <person name="Shintani A."/>
            <person name="Shibuya K."/>
            <person name="Yoshizaki Y."/>
            <person name="Aoki N."/>
            <person name="Mitsuyama S."/>
            <person name="Roe B.A."/>
            <person name="Chen F."/>
            <person name="Chu L."/>
            <person name="Crabtree J."/>
            <person name="Deschamps S."/>
            <person name="Do A."/>
            <person name="Do T."/>
            <person name="Dorman A."/>
            <person name="Fang F."/>
            <person name="Fu Y."/>
            <person name="Hu P."/>
            <person name="Hua A."/>
            <person name="Kenton S."/>
            <person name="Lai H."/>
            <person name="Lao H.I."/>
            <person name="Lewis J."/>
            <person name="Lewis S."/>
            <person name="Lin S.-P."/>
            <person name="Loh P."/>
            <person name="Malaj E."/>
            <person name="Nguyen T."/>
            <person name="Pan H."/>
            <person name="Phan S."/>
            <person name="Qi S."/>
            <person name="Qian Y."/>
            <person name="Ray L."/>
            <person name="Ren Q."/>
            <person name="Shaull S."/>
            <person name="Sloan D."/>
            <person name="Song L."/>
            <person name="Wang Q."/>
            <person name="Wang Y."/>
            <person name="Wang Z."/>
            <person name="White J."/>
            <person name="Willingham D."/>
            <person name="Wu H."/>
            <person name="Yao Z."/>
            <person name="Zhan M."/>
            <person name="Zhang G."/>
            <person name="Chissoe S."/>
            <person name="Murray J."/>
            <person name="Miller N."/>
            <person name="Minx P."/>
            <person name="Fulton R."/>
            <person name="Johnson D."/>
            <person name="Bemis G."/>
            <person name="Bentley D."/>
            <person name="Bradshaw H."/>
            <person name="Bourne S."/>
            <person name="Cordes M."/>
            <person name="Du Z."/>
            <person name="Fulton L."/>
            <person name="Goela D."/>
            <person name="Graves T."/>
            <person name="Hawkins J."/>
            <person name="Hinds K."/>
            <person name="Kemp K."/>
            <person name="Latreille P."/>
            <person name="Layman D."/>
            <person name="Ozersky P."/>
            <person name="Rohlfing T."/>
            <person name="Scheet P."/>
            <person name="Walker C."/>
            <person name="Wamsley A."/>
            <person name="Wohldmann P."/>
            <person name="Pepin K."/>
            <person name="Nelson J."/>
            <person name="Korf I."/>
            <person name="Bedell J.A."/>
            <person name="Hillier L.W."/>
            <person name="Mardis E."/>
            <person name="Waterston R."/>
            <person name="Wilson R."/>
            <person name="Emanuel B.S."/>
            <person name="Shaikh T."/>
            <person name="Kurahashi H."/>
            <person name="Saitta S."/>
            <person name="Budarf M.L."/>
            <person name="McDermid H.E."/>
            <person name="Johnson A."/>
            <person name="Wong A.C.C."/>
            <person name="Morrow B.E."/>
            <person name="Edelmann L."/>
            <person name="Kim U.J."/>
            <person name="Shizuya H."/>
            <person name="Simon M.I."/>
            <person name="Dumanski J.P."/>
            <person name="Peyrard M."/>
            <person name="Kedra D."/>
            <person name="Seroussi E."/>
            <person name="Fransson I."/>
            <person name="Tapia I."/>
            <person name="Bruder C.E."/>
            <person name="O'Brien K.P."/>
            <person name="Wilkinson P."/>
            <person name="Bodenteich A."/>
            <person name="Hartman K."/>
            <person name="Hu X."/>
            <person name="Khan A.S."/>
            <person name="Lane L."/>
            <person name="Tilahun Y."/>
            <person name="Wright H."/>
        </authorList>
    </citation>
    <scope>NUCLEOTIDE SEQUENCE [LARGE SCALE GENOMIC DNA]</scope>
</reference>
<reference key="5">
    <citation type="submission" date="2005-09" db="EMBL/GenBank/DDBJ databases">
        <authorList>
            <person name="Mural R.J."/>
            <person name="Istrail S."/>
            <person name="Sutton G.G."/>
            <person name="Florea L."/>
            <person name="Halpern A.L."/>
            <person name="Mobarry C.M."/>
            <person name="Lippert R."/>
            <person name="Walenz B."/>
            <person name="Shatkay H."/>
            <person name="Dew I."/>
            <person name="Miller J.R."/>
            <person name="Flanigan M.J."/>
            <person name="Edwards N.J."/>
            <person name="Bolanos R."/>
            <person name="Fasulo D."/>
            <person name="Halldorsson B.V."/>
            <person name="Hannenhalli S."/>
            <person name="Turner R."/>
            <person name="Yooseph S."/>
            <person name="Lu F."/>
            <person name="Nusskern D.R."/>
            <person name="Shue B.C."/>
            <person name="Zheng X.H."/>
            <person name="Zhong F."/>
            <person name="Delcher A.L."/>
            <person name="Huson D.H."/>
            <person name="Kravitz S.A."/>
            <person name="Mouchard L."/>
            <person name="Reinert K."/>
            <person name="Remington K.A."/>
            <person name="Clark A.G."/>
            <person name="Waterman M.S."/>
            <person name="Eichler E.E."/>
            <person name="Adams M.D."/>
            <person name="Hunkapiller M.W."/>
            <person name="Myers E.W."/>
            <person name="Venter J.C."/>
        </authorList>
    </citation>
    <scope>NUCLEOTIDE SEQUENCE [LARGE SCALE GENOMIC DNA]</scope>
</reference>
<reference key="6">
    <citation type="journal article" date="2004" name="Genome Res.">
        <title>The status, quality, and expansion of the NIH full-length cDNA project: the Mammalian Gene Collection (MGC).</title>
        <authorList>
            <consortium name="The MGC Project Team"/>
        </authorList>
    </citation>
    <scope>NUCLEOTIDE SEQUENCE [LARGE SCALE MRNA] (ISOFORM 1)</scope>
    <source>
        <tissue>Kidney</tissue>
    </source>
</reference>
<reference key="7">
    <citation type="journal article" date="2009" name="J. Cell Biol.">
        <title>The Cul3-KLHL21 E3 ubiquitin ligase targets aurora B to midzone microtubules in anaphase and is required for cytokinesis.</title>
        <authorList>
            <person name="Maerki S."/>
            <person name="Olma M.H."/>
            <person name="Staubli T."/>
            <person name="Steigemann P."/>
            <person name="Gerlich D.W."/>
            <person name="Quadroni M."/>
            <person name="Sumara I."/>
            <person name="Peter M."/>
        </authorList>
    </citation>
    <scope>FUNCTION</scope>
    <scope>IDENTIFICATION IN A BCR (BTB-CUL3-RBX1) E3 UBIQUITIN LIGASE COMPLEX</scope>
</reference>
<reference key="8">
    <citation type="journal article" date="2012" name="Mol. Cell. Proteomics">
        <title>Comparative large-scale characterisation of plant vs. mammal proteins reveals similar and idiosyncratic N-alpha acetylation features.</title>
        <authorList>
            <person name="Bienvenut W.V."/>
            <person name="Sumpton D."/>
            <person name="Martinez A."/>
            <person name="Lilla S."/>
            <person name="Espagne C."/>
            <person name="Meinnel T."/>
            <person name="Giglione C."/>
        </authorList>
    </citation>
    <scope>ACETYLATION [LARGE SCALE ANALYSIS] AT ALA-2</scope>
    <scope>CLEAVAGE OF INITIATOR METHIONINE [LARGE SCALE ANALYSIS]</scope>
    <scope>IDENTIFICATION BY MASS SPECTROMETRY [LARGE SCALE ANALYSIS]</scope>
</reference>
<reference key="9">
    <citation type="journal article" date="2013" name="J. Proteome Res.">
        <title>Toward a comprehensive characterization of a human cancer cell phosphoproteome.</title>
        <authorList>
            <person name="Zhou H."/>
            <person name="Di Palma S."/>
            <person name="Preisinger C."/>
            <person name="Peng M."/>
            <person name="Polat A.N."/>
            <person name="Heck A.J."/>
            <person name="Mohammed S."/>
        </authorList>
    </citation>
    <scope>PHOSPHORYLATION [LARGE SCALE ANALYSIS] AT THR-605</scope>
    <scope>IDENTIFICATION BY MASS SPECTROMETRY [LARGE SCALE ANALYSIS]</scope>
    <source>
        <tissue>Cervix carcinoma</tissue>
        <tissue>Erythroleukemia</tissue>
    </source>
</reference>
<reference key="10">
    <citation type="journal article" date="2013" name="Cell Cycle">
        <title>CUL3 and protein kinases: insights from PLK1/KLHL22 interaction.</title>
        <authorList>
            <person name="Metzger T."/>
            <person name="Kleiss C."/>
            <person name="Sumara I."/>
        </authorList>
    </citation>
    <scope>INTERACTION WITH PLK1</scope>
</reference>
<reference key="11">
    <citation type="journal article" date="2013" name="Nat. Cell Biol.">
        <title>Ubiquitylation-dependent localization of PLK1 in mitosis.</title>
        <authorList>
            <person name="Beck J."/>
            <person name="Maerki S."/>
            <person name="Posch M."/>
            <person name="Metzger T."/>
            <person name="Persaud A."/>
            <person name="Scheel H."/>
            <person name="Hofmann K."/>
            <person name="Rotin D."/>
            <person name="Pedrioli P."/>
            <person name="Swedlow J.R."/>
            <person name="Peter M."/>
            <person name="Sumara I."/>
        </authorList>
    </citation>
    <scope>FUNCTION</scope>
    <scope>PATHWAY</scope>
    <scope>SUBCELLULAR LOCATION</scope>
    <scope>INTERACTION WITH PLK1</scope>
</reference>
<reference key="12">
    <citation type="journal article" date="2018" name="Nature">
        <title>KLHL22 activates amino-acid-dependent mTORC1 signalling to promote tumorigenesis and ageing.</title>
        <authorList>
            <person name="Chen J."/>
            <person name="Ou Y."/>
            <person name="Yang Y."/>
            <person name="Li W."/>
            <person name="Xu Y."/>
            <person name="Xie Y."/>
            <person name="Liu Y."/>
        </authorList>
    </citation>
    <scope>FUNCTION</scope>
    <scope>PATHWAY</scope>
    <scope>INTERACTION WITH DEPDC5 AND YWHAE</scope>
    <scope>SUBCELLULAR LOCATION</scope>
    <scope>MISCELLANEOUS</scope>
    <scope>MUTAGENESIS OF SER-18</scope>
</reference>
<reference key="13">
    <citation type="journal article" date="2017" name="Hum. Mutat.">
        <title>A recurrent de novo mutation in ACTG1 causes isolated ocular coloboma.</title>
        <authorList>
            <consortium name="UK10K"/>
            <person name="Rainger J."/>
            <person name="Williamson K.A."/>
            <person name="Soares D.C."/>
            <person name="Truch J."/>
            <person name="Kurian D."/>
            <person name="Gillessen-Kaesbach G."/>
            <person name="Seawright A."/>
            <person name="Prendergast J."/>
            <person name="Halachev M."/>
            <person name="Wheeler A."/>
            <person name="McTeir L."/>
            <person name="Gill A.C."/>
            <person name="van Heyningen V."/>
            <person name="Davey M.G."/>
            <person name="FitzPatrick D.R."/>
        </authorList>
    </citation>
    <scope>VARIANT GLN-20</scope>
</reference>
<dbReference type="EMBL" id="CR456352">
    <property type="protein sequence ID" value="CAG30238.1"/>
    <property type="molecule type" value="mRNA"/>
</dbReference>
<dbReference type="EMBL" id="AK027266">
    <property type="protein sequence ID" value="BAB55007.1"/>
    <property type="status" value="ALT_SEQ"/>
    <property type="molecule type" value="mRNA"/>
</dbReference>
<dbReference type="EMBL" id="AK290669">
    <property type="protein sequence ID" value="BAF83358.1"/>
    <property type="molecule type" value="mRNA"/>
</dbReference>
<dbReference type="EMBL" id="AK294682">
    <property type="protein sequence ID" value="BAH11847.1"/>
    <property type="molecule type" value="mRNA"/>
</dbReference>
<dbReference type="EMBL" id="AK222850">
    <property type="protein sequence ID" value="BAD96570.1"/>
    <property type="molecule type" value="mRNA"/>
</dbReference>
<dbReference type="EMBL" id="AC007731">
    <property type="status" value="NOT_ANNOTATED_CDS"/>
    <property type="molecule type" value="Genomic_DNA"/>
</dbReference>
<dbReference type="EMBL" id="CH471176">
    <property type="protein sequence ID" value="EAX02961.1"/>
    <property type="molecule type" value="Genomic_DNA"/>
</dbReference>
<dbReference type="EMBL" id="CH471176">
    <property type="protein sequence ID" value="EAX02962.1"/>
    <property type="molecule type" value="Genomic_DNA"/>
</dbReference>
<dbReference type="EMBL" id="CH471176">
    <property type="protein sequence ID" value="EAX02963.1"/>
    <property type="molecule type" value="Genomic_DNA"/>
</dbReference>
<dbReference type="EMBL" id="BC015923">
    <property type="protein sequence ID" value="AAH15923.1"/>
    <property type="molecule type" value="mRNA"/>
</dbReference>
<dbReference type="CCDS" id="CCDS13780.1">
    <molecule id="Q53GT1-1"/>
</dbReference>
<dbReference type="RefSeq" id="NP_116164.2">
    <molecule id="Q53GT1-1"/>
    <property type="nucleotide sequence ID" value="NM_032775.3"/>
</dbReference>
<dbReference type="RefSeq" id="XP_016884507.2">
    <molecule id="Q53GT1-3"/>
    <property type="nucleotide sequence ID" value="XM_017029018.3"/>
</dbReference>
<dbReference type="RefSeq" id="XP_016884510.1">
    <molecule id="Q53GT1-1"/>
    <property type="nucleotide sequence ID" value="XM_017029021.3"/>
</dbReference>
<dbReference type="RefSeq" id="XP_054182027.1">
    <molecule id="Q53GT1-1"/>
    <property type="nucleotide sequence ID" value="XM_054326052.1"/>
</dbReference>
<dbReference type="RefSeq" id="XP_054182032.1">
    <molecule id="Q53GT1-3"/>
    <property type="nucleotide sequence ID" value="XM_054326057.1"/>
</dbReference>
<dbReference type="PDB" id="8K8T">
    <property type="method" value="EM"/>
    <property type="resolution" value="3.80 A"/>
    <property type="chains" value="K/L=1-634"/>
</dbReference>
<dbReference type="PDB" id="8K9I">
    <property type="method" value="EM"/>
    <property type="resolution" value="4.20 A"/>
    <property type="chains" value="K/L=1-178"/>
</dbReference>
<dbReference type="PDB" id="8KHP">
    <property type="method" value="EM"/>
    <property type="resolution" value="3.67 A"/>
    <property type="chains" value="A/B=1-634"/>
</dbReference>
<dbReference type="PDB" id="8W4J">
    <property type="method" value="EM"/>
    <property type="resolution" value="3.06 A"/>
    <property type="chains" value="I/J=1-634"/>
</dbReference>
<dbReference type="PDBsum" id="8K8T"/>
<dbReference type="PDBsum" id="8K9I"/>
<dbReference type="PDBsum" id="8KHP"/>
<dbReference type="PDBsum" id="8W4J"/>
<dbReference type="EMDB" id="EMD-36961"/>
<dbReference type="EMDB" id="EMD-36987"/>
<dbReference type="EMDB" id="EMD-37247"/>
<dbReference type="EMDB" id="EMD-37266"/>
<dbReference type="SMR" id="Q53GT1"/>
<dbReference type="BioGRID" id="124308">
    <property type="interactions" value="177"/>
</dbReference>
<dbReference type="ComplexPortal" id="CPX-8122">
    <property type="entry name" value="CRL3 E3 ubiquitin ligase complex, KLHL22 variant"/>
</dbReference>
<dbReference type="FunCoup" id="Q53GT1">
    <property type="interactions" value="927"/>
</dbReference>
<dbReference type="IntAct" id="Q53GT1">
    <property type="interactions" value="511"/>
</dbReference>
<dbReference type="MINT" id="Q53GT1"/>
<dbReference type="STRING" id="9606.ENSP00000331682"/>
<dbReference type="GlyGen" id="Q53GT1">
    <property type="glycosylation" value="1 site, 1 O-linked glycan (1 site)"/>
</dbReference>
<dbReference type="iPTMnet" id="Q53GT1"/>
<dbReference type="PhosphoSitePlus" id="Q53GT1"/>
<dbReference type="BioMuta" id="KLHL22"/>
<dbReference type="DMDM" id="109892504"/>
<dbReference type="jPOST" id="Q53GT1"/>
<dbReference type="MassIVE" id="Q53GT1"/>
<dbReference type="PaxDb" id="9606-ENSP00000331682"/>
<dbReference type="PeptideAtlas" id="Q53GT1"/>
<dbReference type="ProteomicsDB" id="62490">
    <molecule id="Q53GT1-1"/>
</dbReference>
<dbReference type="Pumba" id="Q53GT1"/>
<dbReference type="Antibodypedia" id="34893">
    <property type="antibodies" value="183 antibodies from 27 providers"/>
</dbReference>
<dbReference type="DNASU" id="84861"/>
<dbReference type="Ensembl" id="ENST00000328879.9">
    <molecule id="Q53GT1-1"/>
    <property type="protein sequence ID" value="ENSP00000331682.4"/>
    <property type="gene ID" value="ENSG00000099910.17"/>
</dbReference>
<dbReference type="GeneID" id="84861"/>
<dbReference type="KEGG" id="hsa:84861"/>
<dbReference type="MANE-Select" id="ENST00000328879.9">
    <property type="protein sequence ID" value="ENSP00000331682.4"/>
    <property type="RefSeq nucleotide sequence ID" value="NM_032775.4"/>
    <property type="RefSeq protein sequence ID" value="NP_116164.2"/>
</dbReference>
<dbReference type="UCSC" id="uc002zsl.2">
    <molecule id="Q53GT1-1"/>
    <property type="organism name" value="human"/>
</dbReference>
<dbReference type="AGR" id="HGNC:25888"/>
<dbReference type="CTD" id="84861"/>
<dbReference type="DisGeNET" id="84861"/>
<dbReference type="GeneCards" id="KLHL22"/>
<dbReference type="HGNC" id="HGNC:25888">
    <property type="gene designation" value="KLHL22"/>
</dbReference>
<dbReference type="HPA" id="ENSG00000099910">
    <property type="expression patterns" value="Low tissue specificity"/>
</dbReference>
<dbReference type="MIM" id="618020">
    <property type="type" value="gene"/>
</dbReference>
<dbReference type="neXtProt" id="NX_Q53GT1"/>
<dbReference type="OpenTargets" id="ENSG00000099910"/>
<dbReference type="PharmGKB" id="PA142671574"/>
<dbReference type="VEuPathDB" id="HostDB:ENSG00000099910"/>
<dbReference type="eggNOG" id="KOG4441">
    <property type="taxonomic scope" value="Eukaryota"/>
</dbReference>
<dbReference type="GeneTree" id="ENSGT00940000159598"/>
<dbReference type="HOGENOM" id="CLU_004253_14_3_1"/>
<dbReference type="InParanoid" id="Q53GT1"/>
<dbReference type="OMA" id="ACYKPST"/>
<dbReference type="OrthoDB" id="45365at2759"/>
<dbReference type="PAN-GO" id="Q53GT1">
    <property type="GO annotations" value="8 GO annotations based on evolutionary models"/>
</dbReference>
<dbReference type="PhylomeDB" id="Q53GT1"/>
<dbReference type="TreeFam" id="TF328485"/>
<dbReference type="PathwayCommons" id="Q53GT1"/>
<dbReference type="Reactome" id="R-HSA-8951664">
    <property type="pathway name" value="Neddylation"/>
</dbReference>
<dbReference type="Reactome" id="R-HSA-983168">
    <property type="pathway name" value="Antigen processing: Ubiquitination &amp; Proteasome degradation"/>
</dbReference>
<dbReference type="SignaLink" id="Q53GT1"/>
<dbReference type="SIGNOR" id="Q53GT1"/>
<dbReference type="UniPathway" id="UPA00143"/>
<dbReference type="BioGRID-ORCS" id="84861">
    <property type="hits" value="26 hits in 1199 CRISPR screens"/>
</dbReference>
<dbReference type="ChiTaRS" id="KLHL22">
    <property type="organism name" value="human"/>
</dbReference>
<dbReference type="GenomeRNAi" id="84861"/>
<dbReference type="Pharos" id="Q53GT1">
    <property type="development level" value="Tbio"/>
</dbReference>
<dbReference type="PRO" id="PR:Q53GT1"/>
<dbReference type="Proteomes" id="UP000005640">
    <property type="component" value="Chromosome 22"/>
</dbReference>
<dbReference type="RNAct" id="Q53GT1">
    <property type="molecule type" value="protein"/>
</dbReference>
<dbReference type="Bgee" id="ENSG00000099910">
    <property type="expression patterns" value="Expressed in right hemisphere of cerebellum and 168 other cell types or tissues"/>
</dbReference>
<dbReference type="ExpressionAtlas" id="Q53GT1">
    <property type="expression patterns" value="baseline and differential"/>
</dbReference>
<dbReference type="GO" id="GO:0005813">
    <property type="term" value="C:centrosome"/>
    <property type="evidence" value="ECO:0000314"/>
    <property type="project" value="UniProtKB"/>
</dbReference>
<dbReference type="GO" id="GO:0031463">
    <property type="term" value="C:Cul3-RING ubiquitin ligase complex"/>
    <property type="evidence" value="ECO:0000314"/>
    <property type="project" value="UniProtKB"/>
</dbReference>
<dbReference type="GO" id="GO:0005737">
    <property type="term" value="C:cytoplasm"/>
    <property type="evidence" value="ECO:0000314"/>
    <property type="project" value="UniProtKB"/>
</dbReference>
<dbReference type="GO" id="GO:0005829">
    <property type="term" value="C:cytosol"/>
    <property type="evidence" value="ECO:0000314"/>
    <property type="project" value="UniProtKB"/>
</dbReference>
<dbReference type="GO" id="GO:0045171">
    <property type="term" value="C:intercellular bridge"/>
    <property type="evidence" value="ECO:0000314"/>
    <property type="project" value="HPA"/>
</dbReference>
<dbReference type="GO" id="GO:0043231">
    <property type="term" value="C:intracellular membrane-bounded organelle"/>
    <property type="evidence" value="ECO:0000314"/>
    <property type="project" value="HPA"/>
</dbReference>
<dbReference type="GO" id="GO:0005764">
    <property type="term" value="C:lysosome"/>
    <property type="evidence" value="ECO:0007669"/>
    <property type="project" value="UniProtKB-SubCell"/>
</dbReference>
<dbReference type="GO" id="GO:0015630">
    <property type="term" value="C:microtubule cytoskeleton"/>
    <property type="evidence" value="ECO:0000314"/>
    <property type="project" value="HPA"/>
</dbReference>
<dbReference type="GO" id="GO:0072686">
    <property type="term" value="C:mitotic spindle"/>
    <property type="evidence" value="ECO:0000314"/>
    <property type="project" value="HPA"/>
</dbReference>
<dbReference type="GO" id="GO:0005634">
    <property type="term" value="C:nucleus"/>
    <property type="evidence" value="ECO:0007669"/>
    <property type="project" value="UniProtKB-SubCell"/>
</dbReference>
<dbReference type="GO" id="GO:0005827">
    <property type="term" value="C:polar microtubule"/>
    <property type="evidence" value="ECO:0000314"/>
    <property type="project" value="UniProtKB"/>
</dbReference>
<dbReference type="GO" id="GO:0071889">
    <property type="term" value="F:14-3-3 protein binding"/>
    <property type="evidence" value="ECO:0000353"/>
    <property type="project" value="UniProtKB"/>
</dbReference>
<dbReference type="GO" id="GO:1990756">
    <property type="term" value="F:ubiquitin-like ligase-substrate adaptor activity"/>
    <property type="evidence" value="ECO:0000314"/>
    <property type="project" value="UniProtKB"/>
</dbReference>
<dbReference type="GO" id="GO:0051301">
    <property type="term" value="P:cell division"/>
    <property type="evidence" value="ECO:0000315"/>
    <property type="project" value="UniProtKB"/>
</dbReference>
<dbReference type="GO" id="GO:0071230">
    <property type="term" value="P:cellular response to amino acid stimulus"/>
    <property type="evidence" value="ECO:0000314"/>
    <property type="project" value="UniProt"/>
</dbReference>
<dbReference type="GO" id="GO:0071233">
    <property type="term" value="P:cellular response to L-leucine"/>
    <property type="evidence" value="ECO:0000315"/>
    <property type="project" value="UniProtKB"/>
</dbReference>
<dbReference type="GO" id="GO:0000070">
    <property type="term" value="P:mitotic sister chromatid segregation"/>
    <property type="evidence" value="ECO:0000315"/>
    <property type="project" value="UniProtKB"/>
</dbReference>
<dbReference type="GO" id="GO:0007094">
    <property type="term" value="P:mitotic spindle assembly checkpoint signaling"/>
    <property type="evidence" value="ECO:0000315"/>
    <property type="project" value="UniProtKB"/>
</dbReference>
<dbReference type="GO" id="GO:0010507">
    <property type="term" value="P:negative regulation of autophagy"/>
    <property type="evidence" value="ECO:0000315"/>
    <property type="project" value="UniProtKB"/>
</dbReference>
<dbReference type="GO" id="GO:0032480">
    <property type="term" value="P:negative regulation of type I interferon production"/>
    <property type="evidence" value="ECO:0000314"/>
    <property type="project" value="UniProt"/>
</dbReference>
<dbReference type="GO" id="GO:0030307">
    <property type="term" value="P:positive regulation of cell growth"/>
    <property type="evidence" value="ECO:0000315"/>
    <property type="project" value="UniProtKB"/>
</dbReference>
<dbReference type="GO" id="GO:0050870">
    <property type="term" value="P:positive regulation of T cell activation"/>
    <property type="evidence" value="ECO:0000314"/>
    <property type="project" value="UniProt"/>
</dbReference>
<dbReference type="GO" id="GO:0002842">
    <property type="term" value="P:positive regulation of T cell mediated immune response to tumor cell"/>
    <property type="evidence" value="ECO:0000314"/>
    <property type="project" value="UniProt"/>
</dbReference>
<dbReference type="GO" id="GO:1904263">
    <property type="term" value="P:positive regulation of TORC1 signaling"/>
    <property type="evidence" value="ECO:0000314"/>
    <property type="project" value="UniProt"/>
</dbReference>
<dbReference type="GO" id="GO:0043161">
    <property type="term" value="P:proteasome-mediated ubiquitin-dependent protein catabolic process"/>
    <property type="evidence" value="ECO:0000314"/>
    <property type="project" value="UniProt"/>
</dbReference>
<dbReference type="GO" id="GO:0006513">
    <property type="term" value="P:protein monoubiquitination"/>
    <property type="evidence" value="ECO:0000314"/>
    <property type="project" value="UniProtKB"/>
</dbReference>
<dbReference type="GO" id="GO:0006511">
    <property type="term" value="P:ubiquitin-dependent protein catabolic process"/>
    <property type="evidence" value="ECO:0000314"/>
    <property type="project" value="UniProt"/>
</dbReference>
<dbReference type="CDD" id="cd18461">
    <property type="entry name" value="BACK_KLHL22"/>
    <property type="match status" value="1"/>
</dbReference>
<dbReference type="CDD" id="cd18251">
    <property type="entry name" value="BTB_POZ_KLHL22"/>
    <property type="match status" value="1"/>
</dbReference>
<dbReference type="FunFam" id="1.25.40.420:FF:000018">
    <property type="entry name" value="Kelch-like family member 22"/>
    <property type="match status" value="1"/>
</dbReference>
<dbReference type="FunFam" id="2.120.10.80:FF:000040">
    <property type="entry name" value="Kelch-like family member 22"/>
    <property type="match status" value="1"/>
</dbReference>
<dbReference type="FunFam" id="3.30.710.10:FF:000083">
    <property type="entry name" value="Kelch-like family member 22"/>
    <property type="match status" value="1"/>
</dbReference>
<dbReference type="Gene3D" id="1.25.40.420">
    <property type="match status" value="1"/>
</dbReference>
<dbReference type="Gene3D" id="2.120.10.80">
    <property type="entry name" value="Kelch-type beta propeller"/>
    <property type="match status" value="1"/>
</dbReference>
<dbReference type="Gene3D" id="3.30.710.10">
    <property type="entry name" value="Potassium Channel Kv1.1, Chain A"/>
    <property type="match status" value="1"/>
</dbReference>
<dbReference type="InterPro" id="IPR011705">
    <property type="entry name" value="BACK"/>
</dbReference>
<dbReference type="InterPro" id="IPR017096">
    <property type="entry name" value="BTB-kelch_protein"/>
</dbReference>
<dbReference type="InterPro" id="IPR000210">
    <property type="entry name" value="BTB/POZ_dom"/>
</dbReference>
<dbReference type="InterPro" id="IPR015915">
    <property type="entry name" value="Kelch-typ_b-propeller"/>
</dbReference>
<dbReference type="InterPro" id="IPR006652">
    <property type="entry name" value="Kelch_1"/>
</dbReference>
<dbReference type="InterPro" id="IPR030575">
    <property type="entry name" value="KLHL22_BACK"/>
</dbReference>
<dbReference type="InterPro" id="IPR011333">
    <property type="entry name" value="SKP1/BTB/POZ_sf"/>
</dbReference>
<dbReference type="PANTHER" id="PTHR45632:SF5">
    <property type="entry name" value="KELCH-LIKE PROTEIN 22"/>
    <property type="match status" value="1"/>
</dbReference>
<dbReference type="PANTHER" id="PTHR45632">
    <property type="entry name" value="LD33804P"/>
    <property type="match status" value="1"/>
</dbReference>
<dbReference type="Pfam" id="PF07707">
    <property type="entry name" value="BACK"/>
    <property type="match status" value="1"/>
</dbReference>
<dbReference type="Pfam" id="PF00651">
    <property type="entry name" value="BTB"/>
    <property type="match status" value="1"/>
</dbReference>
<dbReference type="Pfam" id="PF01344">
    <property type="entry name" value="Kelch_1"/>
    <property type="match status" value="2"/>
</dbReference>
<dbReference type="Pfam" id="PF24681">
    <property type="entry name" value="Kelch_KLHDC2_KLHL20_DRC7"/>
    <property type="match status" value="1"/>
</dbReference>
<dbReference type="PIRSF" id="PIRSF037037">
    <property type="entry name" value="Kelch-like_protein_gigaxonin"/>
    <property type="match status" value="1"/>
</dbReference>
<dbReference type="SMART" id="SM00875">
    <property type="entry name" value="BACK"/>
    <property type="match status" value="1"/>
</dbReference>
<dbReference type="SMART" id="SM00225">
    <property type="entry name" value="BTB"/>
    <property type="match status" value="1"/>
</dbReference>
<dbReference type="SMART" id="SM00612">
    <property type="entry name" value="Kelch"/>
    <property type="match status" value="6"/>
</dbReference>
<dbReference type="SUPFAM" id="SSF117281">
    <property type="entry name" value="Kelch motif"/>
    <property type="match status" value="1"/>
</dbReference>
<dbReference type="SUPFAM" id="SSF54695">
    <property type="entry name" value="POZ domain"/>
    <property type="match status" value="1"/>
</dbReference>
<dbReference type="PROSITE" id="PS50097">
    <property type="entry name" value="BTB"/>
    <property type="match status" value="1"/>
</dbReference>
<gene>
    <name evidence="11" type="primary">KLHL22</name>
</gene>
<accession>Q53GT1</accession>
<accession>A8K3Q4</accession>
<accession>A8MTV3</accession>
<accession>B7Z2G1</accession>
<accession>D3DX30</accession>
<accession>Q96B68</accession>
<accession>Q96KC6</accession>
<evidence type="ECO:0000250" key="1">
    <source>
        <dbReference type="UniProtKB" id="D3ZZC3"/>
    </source>
</evidence>
<evidence type="ECO:0000255" key="2">
    <source>
        <dbReference type="PROSITE-ProRule" id="PRU00037"/>
    </source>
</evidence>
<evidence type="ECO:0000256" key="3">
    <source>
        <dbReference type="SAM" id="MobiDB-lite"/>
    </source>
</evidence>
<evidence type="ECO:0000269" key="4">
    <source>
    </source>
</evidence>
<evidence type="ECO:0000269" key="5">
    <source>
    </source>
</evidence>
<evidence type="ECO:0000269" key="6">
    <source>
    </source>
</evidence>
<evidence type="ECO:0000269" key="7">
    <source>
    </source>
</evidence>
<evidence type="ECO:0000269" key="8">
    <source>
    </source>
</evidence>
<evidence type="ECO:0000303" key="9">
    <source>
    </source>
</evidence>
<evidence type="ECO:0000305" key="10"/>
<evidence type="ECO:0000312" key="11">
    <source>
        <dbReference type="HGNC" id="HGNC:25888"/>
    </source>
</evidence>
<evidence type="ECO:0007744" key="12">
    <source>
    </source>
</evidence>
<evidence type="ECO:0007744" key="13">
    <source>
    </source>
</evidence>
<evidence type="ECO:0007829" key="14">
    <source>
        <dbReference type="PDB" id="8W4J"/>
    </source>
</evidence>
<organism>
    <name type="scientific">Homo sapiens</name>
    <name type="common">Human</name>
    <dbReference type="NCBI Taxonomy" id="9606"/>
    <lineage>
        <taxon>Eukaryota</taxon>
        <taxon>Metazoa</taxon>
        <taxon>Chordata</taxon>
        <taxon>Craniata</taxon>
        <taxon>Vertebrata</taxon>
        <taxon>Euteleostomi</taxon>
        <taxon>Mammalia</taxon>
        <taxon>Eutheria</taxon>
        <taxon>Euarchontoglires</taxon>
        <taxon>Primates</taxon>
        <taxon>Haplorrhini</taxon>
        <taxon>Catarrhini</taxon>
        <taxon>Hominidae</taxon>
        <taxon>Homo</taxon>
    </lineage>
</organism>
<feature type="initiator methionine" description="Removed" evidence="12">
    <location>
        <position position="1"/>
    </location>
</feature>
<feature type="chain" id="PRO_0000242155" description="Kelch-like protein 22">
    <location>
        <begin position="2"/>
        <end position="634"/>
    </location>
</feature>
<feature type="domain" description="BTB" evidence="2">
    <location>
        <begin position="50"/>
        <end position="117"/>
    </location>
</feature>
<feature type="repeat" description="Kelch 1">
    <location>
        <begin position="299"/>
        <end position="349"/>
    </location>
</feature>
<feature type="repeat" description="Kelch 2">
    <location>
        <begin position="350"/>
        <end position="399"/>
    </location>
</feature>
<feature type="repeat" description="Kelch 3">
    <location>
        <begin position="400"/>
        <end position="446"/>
    </location>
</feature>
<feature type="repeat" description="Kelch 4">
    <location>
        <begin position="448"/>
        <end position="493"/>
    </location>
</feature>
<feature type="repeat" description="Kelch 5">
    <location>
        <begin position="494"/>
        <end position="544"/>
    </location>
</feature>
<feature type="repeat" description="Kelch 6">
    <location>
        <begin position="545"/>
        <end position="593"/>
    </location>
</feature>
<feature type="region of interest" description="Disordered" evidence="3">
    <location>
        <begin position="600"/>
        <end position="634"/>
    </location>
</feature>
<feature type="compositionally biased region" description="Acidic residues" evidence="3">
    <location>
        <begin position="624"/>
        <end position="634"/>
    </location>
</feature>
<feature type="modified residue" description="N-acetylalanine" evidence="12">
    <location>
        <position position="2"/>
    </location>
</feature>
<feature type="modified residue" description="Phosphothreonine" evidence="1">
    <location>
        <position position="463"/>
    </location>
</feature>
<feature type="modified residue" description="Phosphotyrosine" evidence="1">
    <location>
        <position position="466"/>
    </location>
</feature>
<feature type="modified residue" description="Phosphothreonine" evidence="1">
    <location>
        <position position="475"/>
    </location>
</feature>
<feature type="modified residue" description="Phosphothreonine" evidence="13">
    <location>
        <position position="605"/>
    </location>
</feature>
<feature type="splice variant" id="VSP_057028" description="In isoform 2." evidence="9">
    <location>
        <begin position="1"/>
        <end position="143"/>
    </location>
</feature>
<feature type="sequence variant" id="VAR_079854" description="Found in a patient with isolated coloboma; uncertain significance." evidence="7">
    <original>P</original>
    <variation>Q</variation>
    <location>
        <position position="20"/>
    </location>
</feature>
<feature type="mutagenesis site" description="Loss of interaction with YWHAE. Loss of nuclear localization upon amino acid starvation." evidence="8">
    <original>S</original>
    <variation>A</variation>
    <location>
        <position position="18"/>
    </location>
</feature>
<feature type="sequence conflict" description="In Ref. 3; BAD96570." evidence="10" ref="3">
    <original>Y</original>
    <variation>H</variation>
    <location>
        <position position="352"/>
    </location>
</feature>
<feature type="helix" evidence="14">
    <location>
        <begin position="32"/>
        <end position="46"/>
    </location>
</feature>
<feature type="helix" evidence="14">
    <location>
        <begin position="65"/>
        <end position="71"/>
    </location>
</feature>
<feature type="helix" evidence="14">
    <location>
        <begin position="74"/>
        <end position="79"/>
    </location>
</feature>
<feature type="strand" evidence="14">
    <location>
        <begin position="81"/>
        <end position="84"/>
    </location>
</feature>
<feature type="helix" evidence="14">
    <location>
        <begin position="85"/>
        <end position="87"/>
    </location>
</feature>
<feature type="strand" evidence="14">
    <location>
        <begin position="88"/>
        <end position="90"/>
    </location>
</feature>
<feature type="helix" evidence="14">
    <location>
        <begin position="98"/>
        <end position="110"/>
    </location>
</feature>
<feature type="strand" evidence="14">
    <location>
        <begin position="117"/>
        <end position="120"/>
    </location>
</feature>
<feature type="helix" evidence="14">
    <location>
        <begin position="121"/>
        <end position="128"/>
    </location>
</feature>
<feature type="turn" evidence="14">
    <location>
        <begin position="129"/>
        <end position="131"/>
    </location>
</feature>
<feature type="helix" evidence="14">
    <location>
        <begin position="133"/>
        <end position="145"/>
    </location>
</feature>
<feature type="helix" evidence="14">
    <location>
        <begin position="149"/>
        <end position="151"/>
    </location>
</feature>
<feature type="helix" evidence="14">
    <location>
        <begin position="152"/>
        <end position="162"/>
    </location>
</feature>
<feature type="turn" evidence="14">
    <location>
        <begin position="165"/>
        <end position="167"/>
    </location>
</feature>
<feature type="helix" evidence="14">
    <location>
        <begin position="168"/>
        <end position="177"/>
    </location>
</feature>
<feature type="helix" evidence="14">
    <location>
        <begin position="179"/>
        <end position="182"/>
    </location>
</feature>
<feature type="helix" evidence="14">
    <location>
        <begin position="187"/>
        <end position="190"/>
    </location>
</feature>
<feature type="helix" evidence="14">
    <location>
        <begin position="194"/>
        <end position="201"/>
    </location>
</feature>
<feature type="helix" evidence="14">
    <location>
        <begin position="212"/>
        <end position="221"/>
    </location>
</feature>
<feature type="helix" evidence="14">
    <location>
        <begin position="224"/>
        <end position="227"/>
    </location>
</feature>
<feature type="helix" evidence="14">
    <location>
        <begin position="239"/>
        <end position="242"/>
    </location>
</feature>
<feature type="turn" evidence="14">
    <location>
        <begin position="246"/>
        <end position="248"/>
    </location>
</feature>
<feature type="helix" evidence="14">
    <location>
        <begin position="251"/>
        <end position="260"/>
    </location>
</feature>
<feature type="helix" evidence="14">
    <location>
        <begin position="267"/>
        <end position="275"/>
    </location>
</feature>
<feature type="helix" evidence="14">
    <location>
        <begin position="276"/>
        <end position="278"/>
    </location>
</feature>
<feature type="turn" evidence="14">
    <location>
        <begin position="281"/>
        <end position="286"/>
    </location>
</feature>
<feature type="turn" evidence="14">
    <location>
        <begin position="323"/>
        <end position="326"/>
    </location>
</feature>
<feature type="turn" evidence="14">
    <location>
        <begin position="374"/>
        <end position="377"/>
    </location>
</feature>
<feature type="strand" evidence="14">
    <location>
        <begin position="398"/>
        <end position="400"/>
    </location>
</feature>
<feature type="strand" evidence="14">
    <location>
        <begin position="409"/>
        <end position="411"/>
    </location>
</feature>
<feature type="turn" evidence="14">
    <location>
        <begin position="421"/>
        <end position="424"/>
    </location>
</feature>
<feature type="strand" evidence="14">
    <location>
        <begin position="442"/>
        <end position="444"/>
    </location>
</feature>
<feature type="strand" evidence="14">
    <location>
        <begin position="447"/>
        <end position="449"/>
    </location>
</feature>
<feature type="turn" evidence="14">
    <location>
        <begin position="468"/>
        <end position="471"/>
    </location>
</feature>
<feature type="strand" evidence="14">
    <location>
        <begin position="488"/>
        <end position="491"/>
    </location>
</feature>
<feature type="strand" evidence="14">
    <location>
        <begin position="494"/>
        <end position="499"/>
    </location>
</feature>
<feature type="strand" evidence="14">
    <location>
        <begin position="506"/>
        <end position="508"/>
    </location>
</feature>
<feature type="turn" evidence="14">
    <location>
        <begin position="519"/>
        <end position="521"/>
    </location>
</feature>
<feature type="strand" evidence="14">
    <location>
        <begin position="531"/>
        <end position="533"/>
    </location>
</feature>
<feature type="strand" evidence="14">
    <location>
        <begin position="542"/>
        <end position="544"/>
    </location>
</feature>
<feature type="turn" evidence="14">
    <location>
        <begin position="554"/>
        <end position="557"/>
    </location>
</feature>
<feature type="strand" evidence="14">
    <location>
        <begin position="565"/>
        <end position="567"/>
    </location>
</feature>
<feature type="turn" evidence="14">
    <location>
        <begin position="568"/>
        <end position="571"/>
    </location>
</feature>
<feature type="strand" evidence="14">
    <location>
        <begin position="572"/>
        <end position="574"/>
    </location>
</feature>
<feature type="helix" evidence="14">
    <location>
        <begin position="595"/>
        <end position="599"/>
    </location>
</feature>